<evidence type="ECO:0000255" key="1">
    <source>
        <dbReference type="HAMAP-Rule" id="MF_01596"/>
    </source>
</evidence>
<organism>
    <name type="scientific">Shigella flexneri serotype 5b (strain 8401)</name>
    <dbReference type="NCBI Taxonomy" id="373384"/>
    <lineage>
        <taxon>Bacteria</taxon>
        <taxon>Pseudomonadati</taxon>
        <taxon>Pseudomonadota</taxon>
        <taxon>Gammaproteobacteria</taxon>
        <taxon>Enterobacterales</taxon>
        <taxon>Enterobacteriaceae</taxon>
        <taxon>Shigella</taxon>
    </lineage>
</organism>
<feature type="chain" id="PRO_0000330683" description="PhoP/PhoQ regulator MgrB">
    <location>
        <begin position="1"/>
        <end position="47"/>
    </location>
</feature>
<feature type="transmembrane region" description="Helical" evidence="1">
    <location>
        <begin position="6"/>
        <end position="26"/>
    </location>
</feature>
<sequence>MKKFRWVVLVVVVLACLLLWAQVFNMMCDQDVQFFSGICAINQFIPW</sequence>
<dbReference type="EMBL" id="CP000266">
    <property type="protein sequence ID" value="ABF03596.1"/>
    <property type="molecule type" value="Genomic_DNA"/>
</dbReference>
<dbReference type="RefSeq" id="WP_000714550.1">
    <property type="nucleotide sequence ID" value="NC_008258.1"/>
</dbReference>
<dbReference type="SMR" id="Q0T519"/>
<dbReference type="GeneID" id="93776075"/>
<dbReference type="KEGG" id="sfv:SFV_1403"/>
<dbReference type="HOGENOM" id="CLU_208030_1_0_6"/>
<dbReference type="Proteomes" id="UP000000659">
    <property type="component" value="Chromosome"/>
</dbReference>
<dbReference type="GO" id="GO:0005886">
    <property type="term" value="C:plasma membrane"/>
    <property type="evidence" value="ECO:0007669"/>
    <property type="project" value="UniProtKB-SubCell"/>
</dbReference>
<dbReference type="GO" id="GO:0070298">
    <property type="term" value="P:negative regulation of phosphorelay signal transduction system"/>
    <property type="evidence" value="ECO:0007669"/>
    <property type="project" value="UniProtKB-UniRule"/>
</dbReference>
<dbReference type="HAMAP" id="MF_01596">
    <property type="entry name" value="MgrB"/>
    <property type="match status" value="1"/>
</dbReference>
<dbReference type="InterPro" id="IPR020907">
    <property type="entry name" value="MgrB"/>
</dbReference>
<dbReference type="NCBIfam" id="NF007635">
    <property type="entry name" value="PRK10299.1"/>
    <property type="match status" value="1"/>
</dbReference>
<dbReference type="Pfam" id="PF13998">
    <property type="entry name" value="MgrB"/>
    <property type="match status" value="1"/>
</dbReference>
<dbReference type="PROSITE" id="PS51257">
    <property type="entry name" value="PROKAR_LIPOPROTEIN"/>
    <property type="match status" value="1"/>
</dbReference>
<gene>
    <name evidence="1" type="primary">mgrB</name>
    <name type="ordered locus">SFV_1403</name>
</gene>
<reference key="1">
    <citation type="journal article" date="2006" name="BMC Genomics">
        <title>Complete genome sequence of Shigella flexneri 5b and comparison with Shigella flexneri 2a.</title>
        <authorList>
            <person name="Nie H."/>
            <person name="Yang F."/>
            <person name="Zhang X."/>
            <person name="Yang J."/>
            <person name="Chen L."/>
            <person name="Wang J."/>
            <person name="Xiong Z."/>
            <person name="Peng J."/>
            <person name="Sun L."/>
            <person name="Dong J."/>
            <person name="Xue Y."/>
            <person name="Xu X."/>
            <person name="Chen S."/>
            <person name="Yao Z."/>
            <person name="Shen Y."/>
            <person name="Jin Q."/>
        </authorList>
    </citation>
    <scope>NUCLEOTIDE SEQUENCE [LARGE SCALE GENOMIC DNA]</scope>
    <source>
        <strain>8401</strain>
    </source>
</reference>
<protein>
    <recommendedName>
        <fullName evidence="1">PhoP/PhoQ regulator MgrB</fullName>
    </recommendedName>
</protein>
<name>MGRB_SHIF8</name>
<accession>Q0T519</accession>
<proteinExistence type="inferred from homology"/>
<keyword id="KW-0997">Cell inner membrane</keyword>
<keyword id="KW-1003">Cell membrane</keyword>
<keyword id="KW-0472">Membrane</keyword>
<keyword id="KW-0812">Transmembrane</keyword>
<keyword id="KW-1133">Transmembrane helix</keyword>
<comment type="function">
    <text evidence="1">PhoP-regulated transcription is redox-sensitive, being activated when the periplasm becomes more reducing. MgrB acts between DsbA/DsbB and PhoP/PhoQ in this pathway. Represses PhoP/PhoQ signaling, possibly by binding to the periplasmic domain of PhoQ, altering its activity and that of downstream effector PhoP.</text>
</comment>
<comment type="subunit">
    <text evidence="1">May form homooligomers. Probably interacts with the periplasmic domain of PhoQ.</text>
</comment>
<comment type="subcellular location">
    <subcellularLocation>
        <location evidence="1">Cell inner membrane</location>
        <topology evidence="1">Single-pass membrane protein</topology>
    </subcellularLocation>
</comment>
<comment type="similarity">
    <text evidence="1">Belongs to the MgrB family.</text>
</comment>